<reference key="1">
    <citation type="journal article" date="2006" name="Proc. Natl. Acad. Sci. U.S.A.">
        <title>Genome sequence of Synechococcus CC9311: insights into adaptation to a coastal environment.</title>
        <authorList>
            <person name="Palenik B."/>
            <person name="Ren Q."/>
            <person name="Dupont C.L."/>
            <person name="Myers G.S."/>
            <person name="Heidelberg J.F."/>
            <person name="Badger J.H."/>
            <person name="Madupu R."/>
            <person name="Nelson W.C."/>
            <person name="Brinkac L.M."/>
            <person name="Dodson R.J."/>
            <person name="Durkin A.S."/>
            <person name="Daugherty S.C."/>
            <person name="Sullivan S.A."/>
            <person name="Khouri H."/>
            <person name="Mohamoud Y."/>
            <person name="Halpin R."/>
            <person name="Paulsen I.T."/>
        </authorList>
    </citation>
    <scope>NUCLEOTIDE SEQUENCE [LARGE SCALE GENOMIC DNA]</scope>
    <source>
        <strain>CC9311</strain>
    </source>
</reference>
<name>OBG_SYNS3</name>
<accession>Q0I7I2</accession>
<feature type="chain" id="PRO_0000386334" description="GTPase Obg">
    <location>
        <begin position="1"/>
        <end position="329"/>
    </location>
</feature>
<feature type="domain" description="Obg" evidence="2">
    <location>
        <begin position="1"/>
        <end position="159"/>
    </location>
</feature>
<feature type="domain" description="OBG-type G" evidence="1">
    <location>
        <begin position="160"/>
        <end position="328"/>
    </location>
</feature>
<feature type="binding site" evidence="1">
    <location>
        <begin position="166"/>
        <end position="173"/>
    </location>
    <ligand>
        <name>ATP</name>
        <dbReference type="ChEBI" id="CHEBI:30616"/>
    </ligand>
</feature>
<feature type="binding site" evidence="1">
    <location>
        <position position="173"/>
    </location>
    <ligand>
        <name>Mg(2+)</name>
        <dbReference type="ChEBI" id="CHEBI:18420"/>
    </ligand>
</feature>
<feature type="binding site" evidence="1">
    <location>
        <begin position="191"/>
        <end position="195"/>
    </location>
    <ligand>
        <name>ATP</name>
        <dbReference type="ChEBI" id="CHEBI:30616"/>
    </ligand>
</feature>
<feature type="binding site" evidence="1">
    <location>
        <position position="193"/>
    </location>
    <ligand>
        <name>Mg(2+)</name>
        <dbReference type="ChEBI" id="CHEBI:18420"/>
    </ligand>
</feature>
<feature type="binding site" evidence="1">
    <location>
        <begin position="213"/>
        <end position="216"/>
    </location>
    <ligand>
        <name>ATP</name>
        <dbReference type="ChEBI" id="CHEBI:30616"/>
    </ligand>
</feature>
<feature type="binding site" evidence="1">
    <location>
        <begin position="280"/>
        <end position="283"/>
    </location>
    <ligand>
        <name>ATP</name>
        <dbReference type="ChEBI" id="CHEBI:30616"/>
    </ligand>
</feature>
<feature type="binding site" evidence="1">
    <location>
        <begin position="309"/>
        <end position="311"/>
    </location>
    <ligand>
        <name>ATP</name>
        <dbReference type="ChEBI" id="CHEBI:30616"/>
    </ligand>
</feature>
<keyword id="KW-0067">ATP-binding</keyword>
<keyword id="KW-0963">Cytoplasm</keyword>
<keyword id="KW-0342">GTP-binding</keyword>
<keyword id="KW-0378">Hydrolase</keyword>
<keyword id="KW-0460">Magnesium</keyword>
<keyword id="KW-0479">Metal-binding</keyword>
<keyword id="KW-0547">Nucleotide-binding</keyword>
<keyword id="KW-1185">Reference proteome</keyword>
<sequence length="329" mass="35095">MQFIDQARISVRGGRGGDGIVAFRREKYVPAGGPSGGDGGQGADVVLEADSNLQTLLDFKYKRLFAGIDGRRGGPNRCTGASGPPLVIKVPCGTEVRHLSTGIVLGDLTTHEERLTVAFGGRGGLGNAHYLSNRNRAPEKCTEGRDGEEWPLQLELKLLAEVGIIGLPNAGKSTLISVLSAARPKIADYPFTTLIPNLGVVRRPTGDGTVFADIPGLIAGAAQGAGLGHDFLRHIERTRLLIHLVDGGAEDPLLDLRVVEKELEAYGHGLVERPRILVINKQELIQEEDLDAIVSALTEASGRTPLLVSAAMNRGLDDMLDRVWSELGI</sequence>
<organism>
    <name type="scientific">Synechococcus sp. (strain CC9311)</name>
    <dbReference type="NCBI Taxonomy" id="64471"/>
    <lineage>
        <taxon>Bacteria</taxon>
        <taxon>Bacillati</taxon>
        <taxon>Cyanobacteriota</taxon>
        <taxon>Cyanophyceae</taxon>
        <taxon>Synechococcales</taxon>
        <taxon>Synechococcaceae</taxon>
        <taxon>Synechococcus</taxon>
    </lineage>
</organism>
<gene>
    <name evidence="1" type="primary">obg</name>
    <name type="ordered locus">sync_2394</name>
</gene>
<evidence type="ECO:0000255" key="1">
    <source>
        <dbReference type="HAMAP-Rule" id="MF_01454"/>
    </source>
</evidence>
<evidence type="ECO:0000255" key="2">
    <source>
        <dbReference type="PROSITE-ProRule" id="PRU01231"/>
    </source>
</evidence>
<protein>
    <recommendedName>
        <fullName evidence="1">GTPase Obg</fullName>
        <ecNumber evidence="1">3.6.5.-</ecNumber>
    </recommendedName>
    <alternativeName>
        <fullName evidence="1">GTP-binding protein Obg</fullName>
    </alternativeName>
</protein>
<comment type="function">
    <text evidence="1">An essential GTPase which binds GTP, GDP and possibly (p)ppGpp with moderate affinity, with high nucleotide exchange rates and a fairly low GTP hydrolysis rate. Plays a role in control of the cell cycle, stress response, ribosome biogenesis and in those bacteria that undergo differentiation, in morphogenesis control.</text>
</comment>
<comment type="cofactor">
    <cofactor evidence="1">
        <name>Mg(2+)</name>
        <dbReference type="ChEBI" id="CHEBI:18420"/>
    </cofactor>
</comment>
<comment type="subunit">
    <text evidence="1">Monomer.</text>
</comment>
<comment type="subcellular location">
    <subcellularLocation>
        <location evidence="1">Cytoplasm</location>
    </subcellularLocation>
</comment>
<comment type="similarity">
    <text evidence="1">Belongs to the TRAFAC class OBG-HflX-like GTPase superfamily. OBG GTPase family.</text>
</comment>
<dbReference type="EC" id="3.6.5.-" evidence="1"/>
<dbReference type="EMBL" id="CP000435">
    <property type="protein sequence ID" value="ABI47461.1"/>
    <property type="molecule type" value="Genomic_DNA"/>
</dbReference>
<dbReference type="RefSeq" id="WP_011620299.1">
    <property type="nucleotide sequence ID" value="NC_008319.1"/>
</dbReference>
<dbReference type="SMR" id="Q0I7I2"/>
<dbReference type="STRING" id="64471.sync_2394"/>
<dbReference type="KEGG" id="syg:sync_2394"/>
<dbReference type="eggNOG" id="COG0536">
    <property type="taxonomic scope" value="Bacteria"/>
</dbReference>
<dbReference type="HOGENOM" id="CLU_011747_2_3_3"/>
<dbReference type="OrthoDB" id="9807318at2"/>
<dbReference type="Proteomes" id="UP000001961">
    <property type="component" value="Chromosome"/>
</dbReference>
<dbReference type="GO" id="GO:0005737">
    <property type="term" value="C:cytoplasm"/>
    <property type="evidence" value="ECO:0007669"/>
    <property type="project" value="UniProtKB-SubCell"/>
</dbReference>
<dbReference type="GO" id="GO:0005524">
    <property type="term" value="F:ATP binding"/>
    <property type="evidence" value="ECO:0007669"/>
    <property type="project" value="UniProtKB-KW"/>
</dbReference>
<dbReference type="GO" id="GO:0005525">
    <property type="term" value="F:GTP binding"/>
    <property type="evidence" value="ECO:0007669"/>
    <property type="project" value="UniProtKB-UniRule"/>
</dbReference>
<dbReference type="GO" id="GO:0003924">
    <property type="term" value="F:GTPase activity"/>
    <property type="evidence" value="ECO:0007669"/>
    <property type="project" value="UniProtKB-UniRule"/>
</dbReference>
<dbReference type="GO" id="GO:0000287">
    <property type="term" value="F:magnesium ion binding"/>
    <property type="evidence" value="ECO:0007669"/>
    <property type="project" value="InterPro"/>
</dbReference>
<dbReference type="GO" id="GO:0042254">
    <property type="term" value="P:ribosome biogenesis"/>
    <property type="evidence" value="ECO:0007669"/>
    <property type="project" value="UniProtKB-UniRule"/>
</dbReference>
<dbReference type="CDD" id="cd01898">
    <property type="entry name" value="Obg"/>
    <property type="match status" value="1"/>
</dbReference>
<dbReference type="FunFam" id="2.70.210.12:FF:000001">
    <property type="entry name" value="GTPase Obg"/>
    <property type="match status" value="1"/>
</dbReference>
<dbReference type="Gene3D" id="2.70.210.12">
    <property type="entry name" value="GTP1/OBG domain"/>
    <property type="match status" value="1"/>
</dbReference>
<dbReference type="Gene3D" id="3.40.50.300">
    <property type="entry name" value="P-loop containing nucleotide triphosphate hydrolases"/>
    <property type="match status" value="1"/>
</dbReference>
<dbReference type="HAMAP" id="MF_01454">
    <property type="entry name" value="GTPase_Obg"/>
    <property type="match status" value="1"/>
</dbReference>
<dbReference type="InterPro" id="IPR031167">
    <property type="entry name" value="G_OBG"/>
</dbReference>
<dbReference type="InterPro" id="IPR006073">
    <property type="entry name" value="GTP-bd"/>
</dbReference>
<dbReference type="InterPro" id="IPR014100">
    <property type="entry name" value="GTP-bd_Obg/CgtA"/>
</dbReference>
<dbReference type="InterPro" id="IPR006169">
    <property type="entry name" value="GTP1_OBG_dom"/>
</dbReference>
<dbReference type="InterPro" id="IPR036726">
    <property type="entry name" value="GTP1_OBG_dom_sf"/>
</dbReference>
<dbReference type="InterPro" id="IPR045086">
    <property type="entry name" value="OBG_GTPase"/>
</dbReference>
<dbReference type="InterPro" id="IPR027417">
    <property type="entry name" value="P-loop_NTPase"/>
</dbReference>
<dbReference type="NCBIfam" id="TIGR02729">
    <property type="entry name" value="Obg_CgtA"/>
    <property type="match status" value="1"/>
</dbReference>
<dbReference type="NCBIfam" id="NF008955">
    <property type="entry name" value="PRK12297.1"/>
    <property type="match status" value="1"/>
</dbReference>
<dbReference type="NCBIfam" id="NF008956">
    <property type="entry name" value="PRK12299.1"/>
    <property type="match status" value="1"/>
</dbReference>
<dbReference type="PANTHER" id="PTHR11702">
    <property type="entry name" value="DEVELOPMENTALLY REGULATED GTP-BINDING PROTEIN-RELATED"/>
    <property type="match status" value="1"/>
</dbReference>
<dbReference type="PANTHER" id="PTHR11702:SF31">
    <property type="entry name" value="MITOCHONDRIAL RIBOSOME-ASSOCIATED GTPASE 2"/>
    <property type="match status" value="1"/>
</dbReference>
<dbReference type="Pfam" id="PF01018">
    <property type="entry name" value="GTP1_OBG"/>
    <property type="match status" value="1"/>
</dbReference>
<dbReference type="Pfam" id="PF01926">
    <property type="entry name" value="MMR_HSR1"/>
    <property type="match status" value="1"/>
</dbReference>
<dbReference type="PIRSF" id="PIRSF002401">
    <property type="entry name" value="GTP_bd_Obg/CgtA"/>
    <property type="match status" value="1"/>
</dbReference>
<dbReference type="PRINTS" id="PR00326">
    <property type="entry name" value="GTP1OBG"/>
</dbReference>
<dbReference type="SUPFAM" id="SSF82051">
    <property type="entry name" value="Obg GTP-binding protein N-terminal domain"/>
    <property type="match status" value="1"/>
</dbReference>
<dbReference type="SUPFAM" id="SSF52540">
    <property type="entry name" value="P-loop containing nucleoside triphosphate hydrolases"/>
    <property type="match status" value="1"/>
</dbReference>
<dbReference type="PROSITE" id="PS51710">
    <property type="entry name" value="G_OBG"/>
    <property type="match status" value="1"/>
</dbReference>
<dbReference type="PROSITE" id="PS51883">
    <property type="entry name" value="OBG"/>
    <property type="match status" value="1"/>
</dbReference>
<proteinExistence type="inferred from homology"/>